<protein>
    <recommendedName>
        <fullName>Uncharacterized protein C1orf141 homolog</fullName>
    </recommendedName>
</protein>
<feature type="chain" id="PRO_0000294457" description="Uncharacterized protein C1orf141 homolog">
    <location>
        <begin position="1"/>
        <end position="446"/>
    </location>
</feature>
<feature type="region of interest" description="Disordered" evidence="1">
    <location>
        <begin position="63"/>
        <end position="95"/>
    </location>
</feature>
<feature type="region of interest" description="Disordered" evidence="1">
    <location>
        <begin position="155"/>
        <end position="232"/>
    </location>
</feature>
<feature type="compositionally biased region" description="Polar residues" evidence="1">
    <location>
        <begin position="156"/>
        <end position="169"/>
    </location>
</feature>
<feature type="compositionally biased region" description="Basic and acidic residues" evidence="1">
    <location>
        <begin position="182"/>
        <end position="199"/>
    </location>
</feature>
<feature type="compositionally biased region" description="Basic and acidic residues" evidence="1">
    <location>
        <begin position="213"/>
        <end position="227"/>
    </location>
</feature>
<feature type="splice variant" id="VSP_026645" description="In isoform 2." evidence="2">
    <location>
        <begin position="1"/>
        <end position="101"/>
    </location>
</feature>
<feature type="splice variant" id="VSP_026646" description="In isoform 3." evidence="3">
    <original>KQSHANPIIFYDTEYVQM</original>
    <variation>AVINNFEAGEDRHFVRLL</variation>
    <location>
        <begin position="266"/>
        <end position="283"/>
    </location>
</feature>
<feature type="splice variant" id="VSP_026647" description="In isoform 3." evidence="3">
    <location>
        <begin position="284"/>
        <end position="446"/>
    </location>
</feature>
<feature type="sequence conflict" description="In Ref. 3; AAI07405/AAI07406." evidence="4" ref="3">
    <original>V</original>
    <variation>A</variation>
    <location>
        <position position="313"/>
    </location>
</feature>
<feature type="sequence conflict" description="In Ref. 3; AAI07405/AAI07406." evidence="4" ref="3">
    <original>R</original>
    <variation>H</variation>
    <location>
        <position position="353"/>
    </location>
</feature>
<feature type="sequence conflict" description="In Ref. 3; AAI07405/AAI07406." evidence="4" ref="3">
    <original>R</original>
    <variation>H</variation>
    <location>
        <position position="364"/>
    </location>
</feature>
<organism>
    <name type="scientific">Mus musculus</name>
    <name type="common">Mouse</name>
    <dbReference type="NCBI Taxonomy" id="10090"/>
    <lineage>
        <taxon>Eukaryota</taxon>
        <taxon>Metazoa</taxon>
        <taxon>Chordata</taxon>
        <taxon>Craniata</taxon>
        <taxon>Vertebrata</taxon>
        <taxon>Euteleostomi</taxon>
        <taxon>Mammalia</taxon>
        <taxon>Eutheria</taxon>
        <taxon>Euarchontoglires</taxon>
        <taxon>Glires</taxon>
        <taxon>Rodentia</taxon>
        <taxon>Myomorpha</taxon>
        <taxon>Muroidea</taxon>
        <taxon>Muridae</taxon>
        <taxon>Murinae</taxon>
        <taxon>Mus</taxon>
        <taxon>Mus</taxon>
    </lineage>
</organism>
<comment type="alternative products">
    <event type="alternative splicing"/>
    <isoform>
        <id>Q9D5Q8-1</id>
        <name>1</name>
        <sequence type="displayed"/>
    </isoform>
    <isoform>
        <id>Q9D5Q8-2</id>
        <name>2</name>
        <sequence type="described" ref="VSP_026645"/>
    </isoform>
    <isoform>
        <id>Q9D5Q8-3</id>
        <name>3</name>
        <sequence type="described" ref="VSP_026646 VSP_026647"/>
    </isoform>
</comment>
<accession>Q9D5Q8</accession>
<accession>A2AKQ4</accession>
<accession>Q3KN93</accession>
<accession>Q3KN94</accession>
<accession>Q3TTD9</accession>
<dbReference type="EMBL" id="AK015018">
    <property type="protein sequence ID" value="BAB29675.1"/>
    <property type="molecule type" value="mRNA"/>
</dbReference>
<dbReference type="EMBL" id="AK161421">
    <property type="protein sequence ID" value="BAE36386.1"/>
    <property type="molecule type" value="mRNA"/>
</dbReference>
<dbReference type="EMBL" id="AL772338">
    <property type="status" value="NOT_ANNOTATED_CDS"/>
    <property type="molecule type" value="Genomic_DNA"/>
</dbReference>
<dbReference type="EMBL" id="BC107404">
    <property type="protein sequence ID" value="AAI07405.1"/>
    <property type="molecule type" value="mRNA"/>
</dbReference>
<dbReference type="EMBL" id="BC107405">
    <property type="protein sequence ID" value="AAI07406.1"/>
    <property type="molecule type" value="mRNA"/>
</dbReference>
<dbReference type="CCDS" id="CCDS51247.1">
    <molecule id="Q9D5Q8-2"/>
</dbReference>
<dbReference type="CCDS" id="CCDS51248.1">
    <molecule id="Q9D5Q8-1"/>
</dbReference>
<dbReference type="RefSeq" id="NP_001156966.1">
    <molecule id="Q9D5Q8-2"/>
    <property type="nucleotide sequence ID" value="NM_001163494.1"/>
</dbReference>
<dbReference type="RefSeq" id="NP_081888.1">
    <molecule id="Q9D5Q8-1"/>
    <property type="nucleotide sequence ID" value="NM_027612.1"/>
</dbReference>
<dbReference type="STRING" id="10090.ENSMUSP00000030245"/>
<dbReference type="iPTMnet" id="Q9D5Q8"/>
<dbReference type="PhosphoSitePlus" id="Q9D5Q8"/>
<dbReference type="PaxDb" id="10090-ENSMUSP00000030245"/>
<dbReference type="Antibodypedia" id="33403">
    <property type="antibodies" value="49 antibodies from 11 providers"/>
</dbReference>
<dbReference type="Ensembl" id="ENSMUST00000030245.10">
    <molecule id="Q9D5Q8-1"/>
    <property type="protein sequence ID" value="ENSMUSP00000030245.4"/>
    <property type="gene ID" value="ENSMUSG00000028520.13"/>
</dbReference>
<dbReference type="Ensembl" id="ENSMUST00000097944.4">
    <molecule id="Q9D5Q8-3"/>
    <property type="protein sequence ID" value="ENSMUSP00000095557.4"/>
    <property type="gene ID" value="ENSMUSG00000028520.13"/>
</dbReference>
<dbReference type="Ensembl" id="ENSMUST00000168664.8">
    <molecule id="Q9D5Q8-2"/>
    <property type="protein sequence ID" value="ENSMUSP00000131846.2"/>
    <property type="gene ID" value="ENSMUSG00000028520.13"/>
</dbReference>
<dbReference type="GeneID" id="70941"/>
<dbReference type="KEGG" id="mmu:70941"/>
<dbReference type="UCSC" id="uc008txp.3">
    <molecule id="Q9D5Q8-1"/>
    <property type="organism name" value="mouse"/>
</dbReference>
<dbReference type="AGR" id="MGI:1918191"/>
<dbReference type="MGI" id="MGI:1918191">
    <property type="gene designation" value="4921539E11Rik"/>
</dbReference>
<dbReference type="VEuPathDB" id="HostDB:ENSMUSG00000028520"/>
<dbReference type="eggNOG" id="ENOG502SCCV">
    <property type="taxonomic scope" value="Eukaryota"/>
</dbReference>
<dbReference type="GeneTree" id="ENSGT00390000010146"/>
<dbReference type="HOGENOM" id="CLU_058935_0_0_1"/>
<dbReference type="InParanoid" id="Q9D5Q8"/>
<dbReference type="OMA" id="HPMENRN"/>
<dbReference type="OrthoDB" id="9905507at2759"/>
<dbReference type="PhylomeDB" id="Q9D5Q8"/>
<dbReference type="TreeFam" id="TF340010"/>
<dbReference type="BioGRID-ORCS" id="70941">
    <property type="hits" value="1 hit in 77 CRISPR screens"/>
</dbReference>
<dbReference type="PRO" id="PR:Q9D5Q8"/>
<dbReference type="Proteomes" id="UP000000589">
    <property type="component" value="Chromosome 4"/>
</dbReference>
<dbReference type="RNAct" id="Q9D5Q8">
    <property type="molecule type" value="protein"/>
</dbReference>
<dbReference type="Bgee" id="ENSMUSG00000028520">
    <property type="expression patterns" value="Expressed in seminiferous tubule of testis and 8 other cell types or tissues"/>
</dbReference>
<dbReference type="InterPro" id="IPR027847">
    <property type="entry name" value="DUF4545"/>
</dbReference>
<dbReference type="PANTHER" id="PTHR36873">
    <property type="entry name" value="HYPOTHETICAL GENE SUPPORTED BY BC079057"/>
    <property type="match status" value="1"/>
</dbReference>
<dbReference type="PANTHER" id="PTHR36873:SF1">
    <property type="entry name" value="HYPOTHETICAL GENE SUPPORTED BY BC079057"/>
    <property type="match status" value="1"/>
</dbReference>
<dbReference type="Pfam" id="PF15078">
    <property type="entry name" value="DUF4545"/>
    <property type="match status" value="1"/>
</dbReference>
<keyword id="KW-0025">Alternative splicing</keyword>
<keyword id="KW-1185">Reference proteome</keyword>
<evidence type="ECO:0000256" key="1">
    <source>
        <dbReference type="SAM" id="MobiDB-lite"/>
    </source>
</evidence>
<evidence type="ECO:0000303" key="2">
    <source>
    </source>
</evidence>
<evidence type="ECO:0000303" key="3">
    <source>
    </source>
</evidence>
<evidence type="ECO:0000305" key="4"/>
<reference key="1">
    <citation type="journal article" date="2005" name="Science">
        <title>The transcriptional landscape of the mammalian genome.</title>
        <authorList>
            <person name="Carninci P."/>
            <person name="Kasukawa T."/>
            <person name="Katayama S."/>
            <person name="Gough J."/>
            <person name="Frith M.C."/>
            <person name="Maeda N."/>
            <person name="Oyama R."/>
            <person name="Ravasi T."/>
            <person name="Lenhard B."/>
            <person name="Wells C."/>
            <person name="Kodzius R."/>
            <person name="Shimokawa K."/>
            <person name="Bajic V.B."/>
            <person name="Brenner S.E."/>
            <person name="Batalov S."/>
            <person name="Forrest A.R."/>
            <person name="Zavolan M."/>
            <person name="Davis M.J."/>
            <person name="Wilming L.G."/>
            <person name="Aidinis V."/>
            <person name="Allen J.E."/>
            <person name="Ambesi-Impiombato A."/>
            <person name="Apweiler R."/>
            <person name="Aturaliya R.N."/>
            <person name="Bailey T.L."/>
            <person name="Bansal M."/>
            <person name="Baxter L."/>
            <person name="Beisel K.W."/>
            <person name="Bersano T."/>
            <person name="Bono H."/>
            <person name="Chalk A.M."/>
            <person name="Chiu K.P."/>
            <person name="Choudhary V."/>
            <person name="Christoffels A."/>
            <person name="Clutterbuck D.R."/>
            <person name="Crowe M.L."/>
            <person name="Dalla E."/>
            <person name="Dalrymple B.P."/>
            <person name="de Bono B."/>
            <person name="Della Gatta G."/>
            <person name="di Bernardo D."/>
            <person name="Down T."/>
            <person name="Engstrom P."/>
            <person name="Fagiolini M."/>
            <person name="Faulkner G."/>
            <person name="Fletcher C.F."/>
            <person name="Fukushima T."/>
            <person name="Furuno M."/>
            <person name="Futaki S."/>
            <person name="Gariboldi M."/>
            <person name="Georgii-Hemming P."/>
            <person name="Gingeras T.R."/>
            <person name="Gojobori T."/>
            <person name="Green R.E."/>
            <person name="Gustincich S."/>
            <person name="Harbers M."/>
            <person name="Hayashi Y."/>
            <person name="Hensch T.K."/>
            <person name="Hirokawa N."/>
            <person name="Hill D."/>
            <person name="Huminiecki L."/>
            <person name="Iacono M."/>
            <person name="Ikeo K."/>
            <person name="Iwama A."/>
            <person name="Ishikawa T."/>
            <person name="Jakt M."/>
            <person name="Kanapin A."/>
            <person name="Katoh M."/>
            <person name="Kawasawa Y."/>
            <person name="Kelso J."/>
            <person name="Kitamura H."/>
            <person name="Kitano H."/>
            <person name="Kollias G."/>
            <person name="Krishnan S.P."/>
            <person name="Kruger A."/>
            <person name="Kummerfeld S.K."/>
            <person name="Kurochkin I.V."/>
            <person name="Lareau L.F."/>
            <person name="Lazarevic D."/>
            <person name="Lipovich L."/>
            <person name="Liu J."/>
            <person name="Liuni S."/>
            <person name="McWilliam S."/>
            <person name="Madan Babu M."/>
            <person name="Madera M."/>
            <person name="Marchionni L."/>
            <person name="Matsuda H."/>
            <person name="Matsuzawa S."/>
            <person name="Miki H."/>
            <person name="Mignone F."/>
            <person name="Miyake S."/>
            <person name="Morris K."/>
            <person name="Mottagui-Tabar S."/>
            <person name="Mulder N."/>
            <person name="Nakano N."/>
            <person name="Nakauchi H."/>
            <person name="Ng P."/>
            <person name="Nilsson R."/>
            <person name="Nishiguchi S."/>
            <person name="Nishikawa S."/>
            <person name="Nori F."/>
            <person name="Ohara O."/>
            <person name="Okazaki Y."/>
            <person name="Orlando V."/>
            <person name="Pang K.C."/>
            <person name="Pavan W.J."/>
            <person name="Pavesi G."/>
            <person name="Pesole G."/>
            <person name="Petrovsky N."/>
            <person name="Piazza S."/>
            <person name="Reed J."/>
            <person name="Reid J.F."/>
            <person name="Ring B.Z."/>
            <person name="Ringwald M."/>
            <person name="Rost B."/>
            <person name="Ruan Y."/>
            <person name="Salzberg S.L."/>
            <person name="Sandelin A."/>
            <person name="Schneider C."/>
            <person name="Schoenbach C."/>
            <person name="Sekiguchi K."/>
            <person name="Semple C.A."/>
            <person name="Seno S."/>
            <person name="Sessa L."/>
            <person name="Sheng Y."/>
            <person name="Shibata Y."/>
            <person name="Shimada H."/>
            <person name="Shimada K."/>
            <person name="Silva D."/>
            <person name="Sinclair B."/>
            <person name="Sperling S."/>
            <person name="Stupka E."/>
            <person name="Sugiura K."/>
            <person name="Sultana R."/>
            <person name="Takenaka Y."/>
            <person name="Taki K."/>
            <person name="Tammoja K."/>
            <person name="Tan S.L."/>
            <person name="Tang S."/>
            <person name="Taylor M.S."/>
            <person name="Tegner J."/>
            <person name="Teichmann S.A."/>
            <person name="Ueda H.R."/>
            <person name="van Nimwegen E."/>
            <person name="Verardo R."/>
            <person name="Wei C.L."/>
            <person name="Yagi K."/>
            <person name="Yamanishi H."/>
            <person name="Zabarovsky E."/>
            <person name="Zhu S."/>
            <person name="Zimmer A."/>
            <person name="Hide W."/>
            <person name="Bult C."/>
            <person name="Grimmond S.M."/>
            <person name="Teasdale R.D."/>
            <person name="Liu E.T."/>
            <person name="Brusic V."/>
            <person name="Quackenbush J."/>
            <person name="Wahlestedt C."/>
            <person name="Mattick J.S."/>
            <person name="Hume D.A."/>
            <person name="Kai C."/>
            <person name="Sasaki D."/>
            <person name="Tomaru Y."/>
            <person name="Fukuda S."/>
            <person name="Kanamori-Katayama M."/>
            <person name="Suzuki M."/>
            <person name="Aoki J."/>
            <person name="Arakawa T."/>
            <person name="Iida J."/>
            <person name="Imamura K."/>
            <person name="Itoh M."/>
            <person name="Kato T."/>
            <person name="Kawaji H."/>
            <person name="Kawagashira N."/>
            <person name="Kawashima T."/>
            <person name="Kojima M."/>
            <person name="Kondo S."/>
            <person name="Konno H."/>
            <person name="Nakano K."/>
            <person name="Ninomiya N."/>
            <person name="Nishio T."/>
            <person name="Okada M."/>
            <person name="Plessy C."/>
            <person name="Shibata K."/>
            <person name="Shiraki T."/>
            <person name="Suzuki S."/>
            <person name="Tagami M."/>
            <person name="Waki K."/>
            <person name="Watahiki A."/>
            <person name="Okamura-Oho Y."/>
            <person name="Suzuki H."/>
            <person name="Kawai J."/>
            <person name="Hayashizaki Y."/>
        </authorList>
    </citation>
    <scope>NUCLEOTIDE SEQUENCE [LARGE SCALE MRNA] (ISOFORMS 1 AND 3)</scope>
    <source>
        <strain>C57BL/6J</strain>
        <tissue>Testis</tissue>
    </source>
</reference>
<reference key="2">
    <citation type="journal article" date="2009" name="PLoS Biol.">
        <title>Lineage-specific biology revealed by a finished genome assembly of the mouse.</title>
        <authorList>
            <person name="Church D.M."/>
            <person name="Goodstadt L."/>
            <person name="Hillier L.W."/>
            <person name="Zody M.C."/>
            <person name="Goldstein S."/>
            <person name="She X."/>
            <person name="Bult C.J."/>
            <person name="Agarwala R."/>
            <person name="Cherry J.L."/>
            <person name="DiCuccio M."/>
            <person name="Hlavina W."/>
            <person name="Kapustin Y."/>
            <person name="Meric P."/>
            <person name="Maglott D."/>
            <person name="Birtle Z."/>
            <person name="Marques A.C."/>
            <person name="Graves T."/>
            <person name="Zhou S."/>
            <person name="Teague B."/>
            <person name="Potamousis K."/>
            <person name="Churas C."/>
            <person name="Place M."/>
            <person name="Herschleb J."/>
            <person name="Runnheim R."/>
            <person name="Forrest D."/>
            <person name="Amos-Landgraf J."/>
            <person name="Schwartz D.C."/>
            <person name="Cheng Z."/>
            <person name="Lindblad-Toh K."/>
            <person name="Eichler E.E."/>
            <person name="Ponting C.P."/>
        </authorList>
    </citation>
    <scope>NUCLEOTIDE SEQUENCE [LARGE SCALE GENOMIC DNA]</scope>
    <source>
        <strain>C57BL/6J</strain>
    </source>
</reference>
<reference key="3">
    <citation type="journal article" date="2004" name="Genome Res.">
        <title>The status, quality, and expansion of the NIH full-length cDNA project: the Mammalian Gene Collection (MGC).</title>
        <authorList>
            <consortium name="The MGC Project Team"/>
        </authorList>
    </citation>
    <scope>NUCLEOTIDE SEQUENCE [LARGE SCALE MRNA] (ISOFORMS 1 AND 2)</scope>
</reference>
<name>CA141_MOUSE</name>
<proteinExistence type="evidence at transcript level"/>
<sequence length="446" mass="51672">MTEKILEKFDALEEKERILEAIRENNTDRHHRQRKKPLITPLLFDLHVQFGDTITPSASKIIKNKPHDLKNPKRSVSFKYKPNNSRSDLEESDLRPPILGTMINYEESKLMDHKEENLKSRPISLRYLKDKDETEYANPLPFPQLWSKHLCKKSAESSVPTPKLTNESNASKKENVSPPFTDQHESRTKKSMHSTDHSADSSTSRGKCPPKGITKESELTRNDEARKPHPVKQSIMLPLDCEDLLKNPKIKTIDLRPAVTVHTSMKQSHANPIIFYDTEYVQMLFLTKRFTPYAMKCTERNIVLEKNYEVLKVLFSDEPSAVSEPIQQKHLQVFSAEYAQKSINEKRKKKHDRLVSKKISPNTRYNLSQTFSSLSKKFVGYFDKDVTQGKSYKANRFERFSKTKPPPTRKLTTLPIKYDSKPLKNIFEIHKLNNMTPLDNLLGLRA</sequence>